<name>EFTU_BACVZ</name>
<keyword id="KW-0963">Cytoplasm</keyword>
<keyword id="KW-0251">Elongation factor</keyword>
<keyword id="KW-0342">GTP-binding</keyword>
<keyword id="KW-0378">Hydrolase</keyword>
<keyword id="KW-0460">Magnesium</keyword>
<keyword id="KW-0479">Metal-binding</keyword>
<keyword id="KW-0547">Nucleotide-binding</keyword>
<keyword id="KW-0648">Protein biosynthesis</keyword>
<comment type="function">
    <text evidence="2">GTP hydrolase that promotes the GTP-dependent binding of aminoacyl-tRNA to the A-site of ribosomes during protein biosynthesis.</text>
</comment>
<comment type="catalytic activity">
    <reaction evidence="2">
        <text>GTP + H2O = GDP + phosphate + H(+)</text>
        <dbReference type="Rhea" id="RHEA:19669"/>
        <dbReference type="ChEBI" id="CHEBI:15377"/>
        <dbReference type="ChEBI" id="CHEBI:15378"/>
        <dbReference type="ChEBI" id="CHEBI:37565"/>
        <dbReference type="ChEBI" id="CHEBI:43474"/>
        <dbReference type="ChEBI" id="CHEBI:58189"/>
        <dbReference type="EC" id="3.6.5.3"/>
    </reaction>
    <physiologicalReaction direction="left-to-right" evidence="2">
        <dbReference type="Rhea" id="RHEA:19670"/>
    </physiologicalReaction>
</comment>
<comment type="subunit">
    <text evidence="2">Monomer.</text>
</comment>
<comment type="subcellular location">
    <subcellularLocation>
        <location evidence="2">Cytoplasm</location>
    </subcellularLocation>
</comment>
<comment type="similarity">
    <text evidence="2">Belongs to the TRAFAC class translation factor GTPase superfamily. Classic translation factor GTPase family. EF-Tu/EF-1A subfamily.</text>
</comment>
<gene>
    <name evidence="2" type="primary">tuf</name>
    <name type="ordered locus">RBAM_001380</name>
</gene>
<protein>
    <recommendedName>
        <fullName evidence="2">Elongation factor Tu</fullName>
        <shortName evidence="2">EF-Tu</shortName>
        <ecNumber evidence="2">3.6.5.3</ecNumber>
    </recommendedName>
</protein>
<sequence>MAKEKFDRSKSHANIGTIGHVDHGKTTLTAAISTVLHKKSGKGTAMAYDQIDGAPEERERGITISTAHVEYETDTRHYAHVDCPGHADYVKNMITGAAQMDGAILVVSAADGPMPQTREHILLSKNVGVPYIVVFLNKCDMVDDEELLELVEMEVRDLLSEYDFPGDDVPVVKGSALKALEGDAEYEEKILELMAAVDEYIPTPERDTDKPFMMPVEDVFSITGRGTVATGRVERGQVKVGDEVEIIGLQEENSKTTVTGVEMFRKLLDYAEAGDNIGALLRGVAREDIQRGQVLAKPGTITPHSKFKAEVYVLSKEEGGRHTPFFSNYRPQFYFRTTDVTGIINLPEGVEMVMPGDNTEMIVELISTIAIEEGTRFSIREGGRTVGSGVVSTITE</sequence>
<dbReference type="EC" id="3.6.5.3" evidence="2"/>
<dbReference type="EMBL" id="CP000560">
    <property type="protein sequence ID" value="ABS72561.1"/>
    <property type="molecule type" value="Genomic_DNA"/>
</dbReference>
<dbReference type="RefSeq" id="WP_007410400.1">
    <property type="nucleotide sequence ID" value="NC_009725.2"/>
</dbReference>
<dbReference type="SMR" id="A7Z0N5"/>
<dbReference type="GeneID" id="93079277"/>
<dbReference type="KEGG" id="bay:RBAM_001380"/>
<dbReference type="HOGENOM" id="CLU_007265_0_0_9"/>
<dbReference type="Proteomes" id="UP000001120">
    <property type="component" value="Chromosome"/>
</dbReference>
<dbReference type="GO" id="GO:0005829">
    <property type="term" value="C:cytosol"/>
    <property type="evidence" value="ECO:0007669"/>
    <property type="project" value="TreeGrafter"/>
</dbReference>
<dbReference type="GO" id="GO:0005525">
    <property type="term" value="F:GTP binding"/>
    <property type="evidence" value="ECO:0007669"/>
    <property type="project" value="UniProtKB-UniRule"/>
</dbReference>
<dbReference type="GO" id="GO:0003924">
    <property type="term" value="F:GTPase activity"/>
    <property type="evidence" value="ECO:0007669"/>
    <property type="project" value="InterPro"/>
</dbReference>
<dbReference type="GO" id="GO:0003746">
    <property type="term" value="F:translation elongation factor activity"/>
    <property type="evidence" value="ECO:0007669"/>
    <property type="project" value="UniProtKB-UniRule"/>
</dbReference>
<dbReference type="CDD" id="cd01884">
    <property type="entry name" value="EF_Tu"/>
    <property type="match status" value="1"/>
</dbReference>
<dbReference type="CDD" id="cd03697">
    <property type="entry name" value="EFTU_II"/>
    <property type="match status" value="1"/>
</dbReference>
<dbReference type="CDD" id="cd03707">
    <property type="entry name" value="EFTU_III"/>
    <property type="match status" value="1"/>
</dbReference>
<dbReference type="FunFam" id="2.40.30.10:FF:000001">
    <property type="entry name" value="Elongation factor Tu"/>
    <property type="match status" value="1"/>
</dbReference>
<dbReference type="FunFam" id="3.40.50.300:FF:000003">
    <property type="entry name" value="Elongation factor Tu"/>
    <property type="match status" value="1"/>
</dbReference>
<dbReference type="Gene3D" id="3.40.50.300">
    <property type="entry name" value="P-loop containing nucleotide triphosphate hydrolases"/>
    <property type="match status" value="1"/>
</dbReference>
<dbReference type="Gene3D" id="2.40.30.10">
    <property type="entry name" value="Translation factors"/>
    <property type="match status" value="2"/>
</dbReference>
<dbReference type="HAMAP" id="MF_00118_B">
    <property type="entry name" value="EF_Tu_B"/>
    <property type="match status" value="1"/>
</dbReference>
<dbReference type="InterPro" id="IPR041709">
    <property type="entry name" value="EF-Tu_GTP-bd"/>
</dbReference>
<dbReference type="InterPro" id="IPR050055">
    <property type="entry name" value="EF-Tu_GTPase"/>
</dbReference>
<dbReference type="InterPro" id="IPR004161">
    <property type="entry name" value="EFTu-like_2"/>
</dbReference>
<dbReference type="InterPro" id="IPR033720">
    <property type="entry name" value="EFTU_2"/>
</dbReference>
<dbReference type="InterPro" id="IPR031157">
    <property type="entry name" value="G_TR_CS"/>
</dbReference>
<dbReference type="InterPro" id="IPR027417">
    <property type="entry name" value="P-loop_NTPase"/>
</dbReference>
<dbReference type="InterPro" id="IPR005225">
    <property type="entry name" value="Small_GTP-bd"/>
</dbReference>
<dbReference type="InterPro" id="IPR000795">
    <property type="entry name" value="T_Tr_GTP-bd_dom"/>
</dbReference>
<dbReference type="InterPro" id="IPR009000">
    <property type="entry name" value="Transl_B-barrel_sf"/>
</dbReference>
<dbReference type="InterPro" id="IPR009001">
    <property type="entry name" value="Transl_elong_EF1A/Init_IF2_C"/>
</dbReference>
<dbReference type="InterPro" id="IPR004541">
    <property type="entry name" value="Transl_elong_EFTu/EF1A_bac/org"/>
</dbReference>
<dbReference type="InterPro" id="IPR004160">
    <property type="entry name" value="Transl_elong_EFTu/EF1A_C"/>
</dbReference>
<dbReference type="NCBIfam" id="TIGR00485">
    <property type="entry name" value="EF-Tu"/>
    <property type="match status" value="1"/>
</dbReference>
<dbReference type="NCBIfam" id="NF000766">
    <property type="entry name" value="PRK00049.1"/>
    <property type="match status" value="1"/>
</dbReference>
<dbReference type="NCBIfam" id="NF009372">
    <property type="entry name" value="PRK12735.1"/>
    <property type="match status" value="1"/>
</dbReference>
<dbReference type="NCBIfam" id="NF009373">
    <property type="entry name" value="PRK12736.1"/>
    <property type="match status" value="1"/>
</dbReference>
<dbReference type="NCBIfam" id="TIGR00231">
    <property type="entry name" value="small_GTP"/>
    <property type="match status" value="1"/>
</dbReference>
<dbReference type="PANTHER" id="PTHR43721:SF22">
    <property type="entry name" value="ELONGATION FACTOR TU, MITOCHONDRIAL"/>
    <property type="match status" value="1"/>
</dbReference>
<dbReference type="PANTHER" id="PTHR43721">
    <property type="entry name" value="ELONGATION FACTOR TU-RELATED"/>
    <property type="match status" value="1"/>
</dbReference>
<dbReference type="Pfam" id="PF00009">
    <property type="entry name" value="GTP_EFTU"/>
    <property type="match status" value="1"/>
</dbReference>
<dbReference type="Pfam" id="PF03144">
    <property type="entry name" value="GTP_EFTU_D2"/>
    <property type="match status" value="1"/>
</dbReference>
<dbReference type="Pfam" id="PF03143">
    <property type="entry name" value="GTP_EFTU_D3"/>
    <property type="match status" value="1"/>
</dbReference>
<dbReference type="PRINTS" id="PR00315">
    <property type="entry name" value="ELONGATNFCT"/>
</dbReference>
<dbReference type="SUPFAM" id="SSF50465">
    <property type="entry name" value="EF-Tu/eEF-1alpha/eIF2-gamma C-terminal domain"/>
    <property type="match status" value="1"/>
</dbReference>
<dbReference type="SUPFAM" id="SSF52540">
    <property type="entry name" value="P-loop containing nucleoside triphosphate hydrolases"/>
    <property type="match status" value="1"/>
</dbReference>
<dbReference type="SUPFAM" id="SSF50447">
    <property type="entry name" value="Translation proteins"/>
    <property type="match status" value="1"/>
</dbReference>
<dbReference type="PROSITE" id="PS00301">
    <property type="entry name" value="G_TR_1"/>
    <property type="match status" value="1"/>
</dbReference>
<dbReference type="PROSITE" id="PS51722">
    <property type="entry name" value="G_TR_2"/>
    <property type="match status" value="1"/>
</dbReference>
<accession>A7Z0N5</accession>
<reference key="1">
    <citation type="journal article" date="2007" name="Nat. Biotechnol.">
        <title>Comparative analysis of the complete genome sequence of the plant growth-promoting bacterium Bacillus amyloliquefaciens FZB42.</title>
        <authorList>
            <person name="Chen X.H."/>
            <person name="Koumoutsi A."/>
            <person name="Scholz R."/>
            <person name="Eisenreich A."/>
            <person name="Schneider K."/>
            <person name="Heinemeyer I."/>
            <person name="Morgenstern B."/>
            <person name="Voss B."/>
            <person name="Hess W.R."/>
            <person name="Reva O."/>
            <person name="Junge H."/>
            <person name="Voigt B."/>
            <person name="Jungblut P.R."/>
            <person name="Vater J."/>
            <person name="Suessmuth R."/>
            <person name="Liesegang H."/>
            <person name="Strittmatter A."/>
            <person name="Gottschalk G."/>
            <person name="Borriss R."/>
        </authorList>
    </citation>
    <scope>NUCLEOTIDE SEQUENCE [LARGE SCALE GENOMIC DNA]</scope>
    <source>
        <strain>DSM 23117 / BGSC 10A6 / LMG 26770 / FZB42</strain>
    </source>
</reference>
<organism>
    <name type="scientific">Bacillus velezensis (strain DSM 23117 / BGSC 10A6 / LMG 26770 / FZB42)</name>
    <name type="common">Bacillus amyloliquefaciens subsp. plantarum</name>
    <dbReference type="NCBI Taxonomy" id="326423"/>
    <lineage>
        <taxon>Bacteria</taxon>
        <taxon>Bacillati</taxon>
        <taxon>Bacillota</taxon>
        <taxon>Bacilli</taxon>
        <taxon>Bacillales</taxon>
        <taxon>Bacillaceae</taxon>
        <taxon>Bacillus</taxon>
        <taxon>Bacillus amyloliquefaciens group</taxon>
    </lineage>
</organism>
<feature type="chain" id="PRO_1000015603" description="Elongation factor Tu">
    <location>
        <begin position="1"/>
        <end position="396"/>
    </location>
</feature>
<feature type="domain" description="tr-type G">
    <location>
        <begin position="10"/>
        <end position="205"/>
    </location>
</feature>
<feature type="region of interest" description="G1" evidence="1">
    <location>
        <begin position="19"/>
        <end position="26"/>
    </location>
</feature>
<feature type="region of interest" description="G2" evidence="1">
    <location>
        <begin position="61"/>
        <end position="65"/>
    </location>
</feature>
<feature type="region of interest" description="G3" evidence="1">
    <location>
        <begin position="82"/>
        <end position="85"/>
    </location>
</feature>
<feature type="region of interest" description="G4" evidence="1">
    <location>
        <begin position="137"/>
        <end position="140"/>
    </location>
</feature>
<feature type="region of interest" description="G5" evidence="1">
    <location>
        <begin position="175"/>
        <end position="177"/>
    </location>
</feature>
<feature type="binding site" evidence="2">
    <location>
        <begin position="19"/>
        <end position="26"/>
    </location>
    <ligand>
        <name>GTP</name>
        <dbReference type="ChEBI" id="CHEBI:37565"/>
    </ligand>
</feature>
<feature type="binding site" evidence="2">
    <location>
        <position position="26"/>
    </location>
    <ligand>
        <name>Mg(2+)</name>
        <dbReference type="ChEBI" id="CHEBI:18420"/>
    </ligand>
</feature>
<feature type="binding site" evidence="2">
    <location>
        <begin position="82"/>
        <end position="86"/>
    </location>
    <ligand>
        <name>GTP</name>
        <dbReference type="ChEBI" id="CHEBI:37565"/>
    </ligand>
</feature>
<feature type="binding site" evidence="2">
    <location>
        <begin position="137"/>
        <end position="140"/>
    </location>
    <ligand>
        <name>GTP</name>
        <dbReference type="ChEBI" id="CHEBI:37565"/>
    </ligand>
</feature>
<evidence type="ECO:0000250" key="1"/>
<evidence type="ECO:0000255" key="2">
    <source>
        <dbReference type="HAMAP-Rule" id="MF_00118"/>
    </source>
</evidence>
<proteinExistence type="inferred from homology"/>